<name>SYGB_SHEON</name>
<organism>
    <name type="scientific">Shewanella oneidensis (strain ATCC 700550 / JCM 31522 / CIP 106686 / LMG 19005 / NCIMB 14063 / MR-1)</name>
    <dbReference type="NCBI Taxonomy" id="211586"/>
    <lineage>
        <taxon>Bacteria</taxon>
        <taxon>Pseudomonadati</taxon>
        <taxon>Pseudomonadota</taxon>
        <taxon>Gammaproteobacteria</taxon>
        <taxon>Alteromonadales</taxon>
        <taxon>Shewanellaceae</taxon>
        <taxon>Shewanella</taxon>
    </lineage>
</organism>
<protein>
    <recommendedName>
        <fullName evidence="1">Glycine--tRNA ligase beta subunit</fullName>
        <ecNumber evidence="1">6.1.1.14</ecNumber>
    </recommendedName>
    <alternativeName>
        <fullName evidence="1">Glycyl-tRNA synthetase beta subunit</fullName>
        <shortName evidence="1">GlyRS</shortName>
    </alternativeName>
</protein>
<dbReference type="EC" id="6.1.1.14" evidence="1"/>
<dbReference type="EMBL" id="AE014299">
    <property type="protein sequence ID" value="AAN53101.1"/>
    <property type="molecule type" value="Genomic_DNA"/>
</dbReference>
<dbReference type="RefSeq" id="NP_715656.1">
    <property type="nucleotide sequence ID" value="NC_004347.2"/>
</dbReference>
<dbReference type="RefSeq" id="WP_011070430.1">
    <property type="nucleotide sequence ID" value="NC_004347.2"/>
</dbReference>
<dbReference type="SMR" id="Q8EKS6"/>
<dbReference type="STRING" id="211586.SO_0014"/>
<dbReference type="PaxDb" id="211586-SO_0014"/>
<dbReference type="KEGG" id="son:SO_0014"/>
<dbReference type="PATRIC" id="fig|211586.12.peg.14"/>
<dbReference type="eggNOG" id="COG0751">
    <property type="taxonomic scope" value="Bacteria"/>
</dbReference>
<dbReference type="HOGENOM" id="CLU_007220_2_2_6"/>
<dbReference type="OrthoDB" id="9775440at2"/>
<dbReference type="PhylomeDB" id="Q8EKS6"/>
<dbReference type="BioCyc" id="SONE211586:G1GMP-14-MONOMER"/>
<dbReference type="Proteomes" id="UP000008186">
    <property type="component" value="Chromosome"/>
</dbReference>
<dbReference type="GO" id="GO:0005829">
    <property type="term" value="C:cytosol"/>
    <property type="evidence" value="ECO:0000318"/>
    <property type="project" value="GO_Central"/>
</dbReference>
<dbReference type="GO" id="GO:0004814">
    <property type="term" value="F:arginine-tRNA ligase activity"/>
    <property type="evidence" value="ECO:0007669"/>
    <property type="project" value="InterPro"/>
</dbReference>
<dbReference type="GO" id="GO:0005524">
    <property type="term" value="F:ATP binding"/>
    <property type="evidence" value="ECO:0007669"/>
    <property type="project" value="UniProtKB-UniRule"/>
</dbReference>
<dbReference type="GO" id="GO:0004820">
    <property type="term" value="F:glycine-tRNA ligase activity"/>
    <property type="evidence" value="ECO:0007669"/>
    <property type="project" value="UniProtKB-UniRule"/>
</dbReference>
<dbReference type="GO" id="GO:0006420">
    <property type="term" value="P:arginyl-tRNA aminoacylation"/>
    <property type="evidence" value="ECO:0007669"/>
    <property type="project" value="InterPro"/>
</dbReference>
<dbReference type="GO" id="GO:0006426">
    <property type="term" value="P:glycyl-tRNA aminoacylation"/>
    <property type="evidence" value="ECO:0007669"/>
    <property type="project" value="UniProtKB-UniRule"/>
</dbReference>
<dbReference type="Gene3D" id="1.10.730.10">
    <property type="entry name" value="Isoleucyl-tRNA Synthetase, Domain 1"/>
    <property type="match status" value="1"/>
</dbReference>
<dbReference type="HAMAP" id="MF_00255">
    <property type="entry name" value="Gly_tRNA_synth_beta"/>
    <property type="match status" value="1"/>
</dbReference>
<dbReference type="InterPro" id="IPR008909">
    <property type="entry name" value="DALR_anticod-bd"/>
</dbReference>
<dbReference type="InterPro" id="IPR015944">
    <property type="entry name" value="Gly-tRNA-synth_bsu"/>
</dbReference>
<dbReference type="InterPro" id="IPR006194">
    <property type="entry name" value="Gly-tRNA-synth_heterodimer"/>
</dbReference>
<dbReference type="NCBIfam" id="TIGR00211">
    <property type="entry name" value="glyS"/>
    <property type="match status" value="1"/>
</dbReference>
<dbReference type="PANTHER" id="PTHR30075:SF2">
    <property type="entry name" value="GLYCINE--TRNA LIGASE, CHLOROPLASTIC_MITOCHONDRIAL 2"/>
    <property type="match status" value="1"/>
</dbReference>
<dbReference type="PANTHER" id="PTHR30075">
    <property type="entry name" value="GLYCYL-TRNA SYNTHETASE"/>
    <property type="match status" value="1"/>
</dbReference>
<dbReference type="Pfam" id="PF05746">
    <property type="entry name" value="DALR_1"/>
    <property type="match status" value="1"/>
</dbReference>
<dbReference type="Pfam" id="PF02092">
    <property type="entry name" value="tRNA_synt_2f"/>
    <property type="match status" value="1"/>
</dbReference>
<dbReference type="PRINTS" id="PR01045">
    <property type="entry name" value="TRNASYNTHGB"/>
</dbReference>
<dbReference type="SMART" id="SM00836">
    <property type="entry name" value="DALR_1"/>
    <property type="match status" value="1"/>
</dbReference>
<dbReference type="SUPFAM" id="SSF109604">
    <property type="entry name" value="HD-domain/PDEase-like"/>
    <property type="match status" value="1"/>
</dbReference>
<dbReference type="PROSITE" id="PS50861">
    <property type="entry name" value="AA_TRNA_LIGASE_II_GLYAB"/>
    <property type="match status" value="1"/>
</dbReference>
<proteinExistence type="inferred from homology"/>
<gene>
    <name evidence="1" type="primary">glyS</name>
    <name type="ordered locus">SO_0014</name>
</gene>
<comment type="catalytic activity">
    <reaction evidence="1">
        <text>tRNA(Gly) + glycine + ATP = glycyl-tRNA(Gly) + AMP + diphosphate</text>
        <dbReference type="Rhea" id="RHEA:16013"/>
        <dbReference type="Rhea" id="RHEA-COMP:9664"/>
        <dbReference type="Rhea" id="RHEA-COMP:9683"/>
        <dbReference type="ChEBI" id="CHEBI:30616"/>
        <dbReference type="ChEBI" id="CHEBI:33019"/>
        <dbReference type="ChEBI" id="CHEBI:57305"/>
        <dbReference type="ChEBI" id="CHEBI:78442"/>
        <dbReference type="ChEBI" id="CHEBI:78522"/>
        <dbReference type="ChEBI" id="CHEBI:456215"/>
        <dbReference type="EC" id="6.1.1.14"/>
    </reaction>
</comment>
<comment type="subunit">
    <text evidence="1">Tetramer of two alpha and two beta subunits.</text>
</comment>
<comment type="subcellular location">
    <subcellularLocation>
        <location evidence="1">Cytoplasm</location>
    </subcellularLocation>
</comment>
<comment type="similarity">
    <text evidence="1">Belongs to the class-II aminoacyl-tRNA synthetase family.</text>
</comment>
<keyword id="KW-0030">Aminoacyl-tRNA synthetase</keyword>
<keyword id="KW-0067">ATP-binding</keyword>
<keyword id="KW-0963">Cytoplasm</keyword>
<keyword id="KW-0436">Ligase</keyword>
<keyword id="KW-0547">Nucleotide-binding</keyword>
<keyword id="KW-0648">Protein biosynthesis</keyword>
<keyword id="KW-1185">Reference proteome</keyword>
<reference key="1">
    <citation type="journal article" date="2002" name="Nat. Biotechnol.">
        <title>Genome sequence of the dissimilatory metal ion-reducing bacterium Shewanella oneidensis.</title>
        <authorList>
            <person name="Heidelberg J.F."/>
            <person name="Paulsen I.T."/>
            <person name="Nelson K.E."/>
            <person name="Gaidos E.J."/>
            <person name="Nelson W.C."/>
            <person name="Read T.D."/>
            <person name="Eisen J.A."/>
            <person name="Seshadri R."/>
            <person name="Ward N.L."/>
            <person name="Methe B.A."/>
            <person name="Clayton R.A."/>
            <person name="Meyer T."/>
            <person name="Tsapin A."/>
            <person name="Scott J."/>
            <person name="Beanan M.J."/>
            <person name="Brinkac L.M."/>
            <person name="Daugherty S.C."/>
            <person name="DeBoy R.T."/>
            <person name="Dodson R.J."/>
            <person name="Durkin A.S."/>
            <person name="Haft D.H."/>
            <person name="Kolonay J.F."/>
            <person name="Madupu R."/>
            <person name="Peterson J.D."/>
            <person name="Umayam L.A."/>
            <person name="White O."/>
            <person name="Wolf A.M."/>
            <person name="Vamathevan J.J."/>
            <person name="Weidman J.F."/>
            <person name="Impraim M."/>
            <person name="Lee K."/>
            <person name="Berry K.J."/>
            <person name="Lee C."/>
            <person name="Mueller J."/>
            <person name="Khouri H.M."/>
            <person name="Gill J."/>
            <person name="Utterback T.R."/>
            <person name="McDonald L.A."/>
            <person name="Feldblyum T.V."/>
            <person name="Smith H.O."/>
            <person name="Venter J.C."/>
            <person name="Nealson K.H."/>
            <person name="Fraser C.M."/>
        </authorList>
    </citation>
    <scope>NUCLEOTIDE SEQUENCE [LARGE SCALE GENOMIC DNA]</scope>
    <source>
        <strain>ATCC 700550 / JCM 31522 / CIP 106686 / LMG 19005 / NCIMB 14063 / MR-1</strain>
    </source>
</reference>
<sequence>MNFENLLIELGTEELPPKALRKLAESFLANFTEELTKADLAFKSAVWYAAPRRLALNITELAIAQADKIVEKRGPAVSSAFDAGGKPTKAAEGWARGNGITVDQAERLVTDKGEWLVYNAKVEGVETKSLVAAMAQRALDKLPIPKPMRWGSSKTQFIRPVHTATMLLGSELIEGELLGIKSARNIRGHRFMGTGFELDHADNYLTLLKEKGKVIADYESRKALIKADAEKAAAKIGGTADIEDALLEEVTSLVEWPVVLTASFEEKFLSVPSEALVYTMKGDQKYFPVFDDAGKLLPNFIFVANIESKDPAQIISGNEKVVRPRLADAEFFFNTDKKHTLESRLPSLETVLFQQQLGTLKDKVTRISALAAFIAEQTGANAVDAARAGLLSKTDLMTNMVMEFTDTQGTMGMHYARLDGETEAVALAMEEQYKPKFSGDTVPTAAVSCAVALADKLDTLVGIFGIGQAPKGAADPFALRRAAIGVLRIIVENKLPLDLVTLIAKAQELHGANLSNANASEEVLEFLMARFRAWYQDKGINVDVILAVLARRPTRPADFDSRINAVSHFRGLEASSALAAANKRVSNILAKVEGELPSSVNVALLSEAAEQALAAKLAELQPQLAPLFANADYQQALTLLASLRESVDQFFEDVMVMADDAALRNNRLALLNNLREQFLHVADISLLQ</sequence>
<evidence type="ECO:0000255" key="1">
    <source>
        <dbReference type="HAMAP-Rule" id="MF_00255"/>
    </source>
</evidence>
<feature type="chain" id="PRO_1000006405" description="Glycine--tRNA ligase beta subunit">
    <location>
        <begin position="1"/>
        <end position="688"/>
    </location>
</feature>
<accession>Q8EKS6</accession>